<feature type="chain" id="PRO_1000020272" description="1-deoxy-D-xylulose 5-phosphate reductoisomerase">
    <location>
        <begin position="1"/>
        <end position="389"/>
    </location>
</feature>
<feature type="binding site" evidence="1">
    <location>
        <position position="11"/>
    </location>
    <ligand>
        <name>NADPH</name>
        <dbReference type="ChEBI" id="CHEBI:57783"/>
    </ligand>
</feature>
<feature type="binding site" evidence="1">
    <location>
        <position position="12"/>
    </location>
    <ligand>
        <name>NADPH</name>
        <dbReference type="ChEBI" id="CHEBI:57783"/>
    </ligand>
</feature>
<feature type="binding site" evidence="1">
    <location>
        <position position="13"/>
    </location>
    <ligand>
        <name>NADPH</name>
        <dbReference type="ChEBI" id="CHEBI:57783"/>
    </ligand>
</feature>
<feature type="binding site" evidence="1">
    <location>
        <position position="14"/>
    </location>
    <ligand>
        <name>NADPH</name>
        <dbReference type="ChEBI" id="CHEBI:57783"/>
    </ligand>
</feature>
<feature type="binding site" evidence="1">
    <location>
        <position position="39"/>
    </location>
    <ligand>
        <name>NADPH</name>
        <dbReference type="ChEBI" id="CHEBI:57783"/>
    </ligand>
</feature>
<feature type="binding site" evidence="1">
    <location>
        <position position="122"/>
    </location>
    <ligand>
        <name>NADPH</name>
        <dbReference type="ChEBI" id="CHEBI:57783"/>
    </ligand>
</feature>
<feature type="binding site" evidence="1">
    <location>
        <position position="123"/>
    </location>
    <ligand>
        <name>1-deoxy-D-xylulose 5-phosphate</name>
        <dbReference type="ChEBI" id="CHEBI:57792"/>
    </ligand>
</feature>
<feature type="binding site" evidence="1">
    <location>
        <position position="124"/>
    </location>
    <ligand>
        <name>NADPH</name>
        <dbReference type="ChEBI" id="CHEBI:57783"/>
    </ligand>
</feature>
<feature type="binding site" evidence="1">
    <location>
        <position position="148"/>
    </location>
    <ligand>
        <name>Mn(2+)</name>
        <dbReference type="ChEBI" id="CHEBI:29035"/>
    </ligand>
</feature>
<feature type="binding site" evidence="1">
    <location>
        <position position="149"/>
    </location>
    <ligand>
        <name>1-deoxy-D-xylulose 5-phosphate</name>
        <dbReference type="ChEBI" id="CHEBI:57792"/>
    </ligand>
</feature>
<feature type="binding site" evidence="1">
    <location>
        <position position="150"/>
    </location>
    <ligand>
        <name>1-deoxy-D-xylulose 5-phosphate</name>
        <dbReference type="ChEBI" id="CHEBI:57792"/>
    </ligand>
</feature>
<feature type="binding site" evidence="1">
    <location>
        <position position="150"/>
    </location>
    <ligand>
        <name>Mn(2+)</name>
        <dbReference type="ChEBI" id="CHEBI:29035"/>
    </ligand>
</feature>
<feature type="binding site" evidence="1">
    <location>
        <position position="174"/>
    </location>
    <ligand>
        <name>1-deoxy-D-xylulose 5-phosphate</name>
        <dbReference type="ChEBI" id="CHEBI:57792"/>
    </ligand>
</feature>
<feature type="binding site" evidence="1">
    <location>
        <position position="197"/>
    </location>
    <ligand>
        <name>1-deoxy-D-xylulose 5-phosphate</name>
        <dbReference type="ChEBI" id="CHEBI:57792"/>
    </ligand>
</feature>
<feature type="binding site" evidence="1">
    <location>
        <position position="203"/>
    </location>
    <ligand>
        <name>NADPH</name>
        <dbReference type="ChEBI" id="CHEBI:57783"/>
    </ligand>
</feature>
<feature type="binding site" evidence="1">
    <location>
        <position position="210"/>
    </location>
    <ligand>
        <name>1-deoxy-D-xylulose 5-phosphate</name>
        <dbReference type="ChEBI" id="CHEBI:57792"/>
    </ligand>
</feature>
<feature type="binding site" evidence="1">
    <location>
        <position position="215"/>
    </location>
    <ligand>
        <name>1-deoxy-D-xylulose 5-phosphate</name>
        <dbReference type="ChEBI" id="CHEBI:57792"/>
    </ligand>
</feature>
<feature type="binding site" evidence="1">
    <location>
        <position position="216"/>
    </location>
    <ligand>
        <name>1-deoxy-D-xylulose 5-phosphate</name>
        <dbReference type="ChEBI" id="CHEBI:57792"/>
    </ligand>
</feature>
<feature type="binding site" evidence="1">
    <location>
        <position position="219"/>
    </location>
    <ligand>
        <name>1-deoxy-D-xylulose 5-phosphate</name>
        <dbReference type="ChEBI" id="CHEBI:57792"/>
    </ligand>
</feature>
<feature type="binding site" evidence="1">
    <location>
        <position position="219"/>
    </location>
    <ligand>
        <name>Mn(2+)</name>
        <dbReference type="ChEBI" id="CHEBI:29035"/>
    </ligand>
</feature>
<dbReference type="EC" id="1.1.1.267" evidence="1"/>
<dbReference type="EMBL" id="CP000350">
    <property type="protein sequence ID" value="ABJ75554.1"/>
    <property type="molecule type" value="Genomic_DNA"/>
</dbReference>
<dbReference type="RefSeq" id="WP_011669751.1">
    <property type="nucleotide sequence ID" value="NC_008510.1"/>
</dbReference>
<dbReference type="SMR" id="Q04U66"/>
<dbReference type="KEGG" id="lbj:LBJ_0910"/>
<dbReference type="HOGENOM" id="CLU_035714_4_0_12"/>
<dbReference type="UniPathway" id="UPA00056">
    <property type="reaction ID" value="UER00092"/>
</dbReference>
<dbReference type="Proteomes" id="UP000000656">
    <property type="component" value="Chromosome 1"/>
</dbReference>
<dbReference type="GO" id="GO:0030604">
    <property type="term" value="F:1-deoxy-D-xylulose-5-phosphate reductoisomerase activity"/>
    <property type="evidence" value="ECO:0007669"/>
    <property type="project" value="UniProtKB-UniRule"/>
</dbReference>
<dbReference type="GO" id="GO:0030145">
    <property type="term" value="F:manganese ion binding"/>
    <property type="evidence" value="ECO:0007669"/>
    <property type="project" value="TreeGrafter"/>
</dbReference>
<dbReference type="GO" id="GO:0070402">
    <property type="term" value="F:NADPH binding"/>
    <property type="evidence" value="ECO:0007669"/>
    <property type="project" value="InterPro"/>
</dbReference>
<dbReference type="GO" id="GO:0051484">
    <property type="term" value="P:isopentenyl diphosphate biosynthetic process, methylerythritol 4-phosphate pathway involved in terpenoid biosynthetic process"/>
    <property type="evidence" value="ECO:0007669"/>
    <property type="project" value="TreeGrafter"/>
</dbReference>
<dbReference type="FunFam" id="3.40.50.720:FF:000045">
    <property type="entry name" value="1-deoxy-D-xylulose 5-phosphate reductoisomerase"/>
    <property type="match status" value="1"/>
</dbReference>
<dbReference type="Gene3D" id="1.10.1740.10">
    <property type="match status" value="1"/>
</dbReference>
<dbReference type="Gene3D" id="3.40.50.720">
    <property type="entry name" value="NAD(P)-binding Rossmann-like Domain"/>
    <property type="match status" value="1"/>
</dbReference>
<dbReference type="HAMAP" id="MF_00183">
    <property type="entry name" value="DXP_reductoisom"/>
    <property type="match status" value="1"/>
</dbReference>
<dbReference type="InterPro" id="IPR003821">
    <property type="entry name" value="DXP_reductoisomerase"/>
</dbReference>
<dbReference type="InterPro" id="IPR013644">
    <property type="entry name" value="DXP_reductoisomerase_C"/>
</dbReference>
<dbReference type="InterPro" id="IPR013512">
    <property type="entry name" value="DXP_reductoisomerase_N"/>
</dbReference>
<dbReference type="InterPro" id="IPR026877">
    <property type="entry name" value="DXPR_C"/>
</dbReference>
<dbReference type="InterPro" id="IPR036169">
    <property type="entry name" value="DXPR_C_sf"/>
</dbReference>
<dbReference type="InterPro" id="IPR036291">
    <property type="entry name" value="NAD(P)-bd_dom_sf"/>
</dbReference>
<dbReference type="NCBIfam" id="TIGR00243">
    <property type="entry name" value="Dxr"/>
    <property type="match status" value="1"/>
</dbReference>
<dbReference type="PANTHER" id="PTHR30525">
    <property type="entry name" value="1-DEOXY-D-XYLULOSE 5-PHOSPHATE REDUCTOISOMERASE"/>
    <property type="match status" value="1"/>
</dbReference>
<dbReference type="PANTHER" id="PTHR30525:SF0">
    <property type="entry name" value="1-DEOXY-D-XYLULOSE 5-PHOSPHATE REDUCTOISOMERASE, CHLOROPLASTIC"/>
    <property type="match status" value="1"/>
</dbReference>
<dbReference type="Pfam" id="PF08436">
    <property type="entry name" value="DXP_redisom_C"/>
    <property type="match status" value="1"/>
</dbReference>
<dbReference type="Pfam" id="PF02670">
    <property type="entry name" value="DXP_reductoisom"/>
    <property type="match status" value="1"/>
</dbReference>
<dbReference type="Pfam" id="PF13288">
    <property type="entry name" value="DXPR_C"/>
    <property type="match status" value="1"/>
</dbReference>
<dbReference type="PIRSF" id="PIRSF006205">
    <property type="entry name" value="Dxp_reductismrs"/>
    <property type="match status" value="1"/>
</dbReference>
<dbReference type="SUPFAM" id="SSF69055">
    <property type="entry name" value="1-deoxy-D-xylulose-5-phosphate reductoisomerase, C-terminal domain"/>
    <property type="match status" value="1"/>
</dbReference>
<dbReference type="SUPFAM" id="SSF55347">
    <property type="entry name" value="Glyceraldehyde-3-phosphate dehydrogenase-like, C-terminal domain"/>
    <property type="match status" value="1"/>
</dbReference>
<dbReference type="SUPFAM" id="SSF51735">
    <property type="entry name" value="NAD(P)-binding Rossmann-fold domains"/>
    <property type="match status" value="1"/>
</dbReference>
<accession>Q04U66</accession>
<proteinExistence type="inferred from homology"/>
<protein>
    <recommendedName>
        <fullName evidence="1">1-deoxy-D-xylulose 5-phosphate reductoisomerase</fullName>
        <shortName evidence="1">DXP reductoisomerase</shortName>
        <ecNumber evidence="1">1.1.1.267</ecNumber>
    </recommendedName>
    <alternativeName>
        <fullName evidence="1">1-deoxyxylulose-5-phosphate reductoisomerase</fullName>
    </alternativeName>
    <alternativeName>
        <fullName evidence="1">2-C-methyl-D-erythritol 4-phosphate synthase</fullName>
    </alternativeName>
</protein>
<gene>
    <name evidence="1" type="primary">dxr</name>
    <name type="ordered locus">LBJ_0910</name>
</gene>
<evidence type="ECO:0000255" key="1">
    <source>
        <dbReference type="HAMAP-Rule" id="MF_00183"/>
    </source>
</evidence>
<comment type="function">
    <text evidence="1">Catalyzes the NADPH-dependent rearrangement and reduction of 1-deoxy-D-xylulose-5-phosphate (DXP) to 2-C-methyl-D-erythritol 4-phosphate (MEP).</text>
</comment>
<comment type="catalytic activity">
    <reaction evidence="1">
        <text>2-C-methyl-D-erythritol 4-phosphate + NADP(+) = 1-deoxy-D-xylulose 5-phosphate + NADPH + H(+)</text>
        <dbReference type="Rhea" id="RHEA:13717"/>
        <dbReference type="ChEBI" id="CHEBI:15378"/>
        <dbReference type="ChEBI" id="CHEBI:57783"/>
        <dbReference type="ChEBI" id="CHEBI:57792"/>
        <dbReference type="ChEBI" id="CHEBI:58262"/>
        <dbReference type="ChEBI" id="CHEBI:58349"/>
        <dbReference type="EC" id="1.1.1.267"/>
    </reaction>
    <physiologicalReaction direction="right-to-left" evidence="1">
        <dbReference type="Rhea" id="RHEA:13719"/>
    </physiologicalReaction>
</comment>
<comment type="cofactor">
    <cofactor evidence="1">
        <name>Mg(2+)</name>
        <dbReference type="ChEBI" id="CHEBI:18420"/>
    </cofactor>
    <cofactor evidence="1">
        <name>Mn(2+)</name>
        <dbReference type="ChEBI" id="CHEBI:29035"/>
    </cofactor>
</comment>
<comment type="pathway">
    <text evidence="1">Isoprenoid biosynthesis; isopentenyl diphosphate biosynthesis via DXP pathway; isopentenyl diphosphate from 1-deoxy-D-xylulose 5-phosphate: step 1/6.</text>
</comment>
<comment type="similarity">
    <text evidence="1">Belongs to the DXR family.</text>
</comment>
<keyword id="KW-0414">Isoprene biosynthesis</keyword>
<keyword id="KW-0464">Manganese</keyword>
<keyword id="KW-0479">Metal-binding</keyword>
<keyword id="KW-0521">NADP</keyword>
<keyword id="KW-0560">Oxidoreductase</keyword>
<sequence>MTTSVSLLGASGSVGESTLRVLRAYPQEFRLHSFSVHSNLEKAREIQKEFSPEFLCVSDSTADRTVLGNKIGKTQVLYGESALCELVREPEVQIVITAIVGSVGLRPTIAAITSGKRLGIANKETLVTFGPLVNSLIAKHKTKVVPVDSEHNALFQLLESLNRDSVEKIVLTASGGSFRDLSVEQLAYVTKEQALHHPTWNMGPKITVDSNGMINKGLEVIEAHFLFGVPYERIGVVIHPQSIAHGIVELKDGASFVYASYPDMIFPIAHSLFHPEPVPKSLRSYSAKDWGKLEFWEPDLKRYPGLGLAFEAGKAGGTAPCIFNAANEAAVELFLKDEIRFTEIPDYIWYTLDEMPIDFPTSLEEYEEVDRIARKTVLNLKARKVVSAC</sequence>
<organism>
    <name type="scientific">Leptospira borgpetersenii serovar Hardjo-bovis (strain JB197)</name>
    <dbReference type="NCBI Taxonomy" id="355277"/>
    <lineage>
        <taxon>Bacteria</taxon>
        <taxon>Pseudomonadati</taxon>
        <taxon>Spirochaetota</taxon>
        <taxon>Spirochaetia</taxon>
        <taxon>Leptospirales</taxon>
        <taxon>Leptospiraceae</taxon>
        <taxon>Leptospira</taxon>
    </lineage>
</organism>
<name>DXR_LEPBJ</name>
<reference key="1">
    <citation type="journal article" date="2006" name="Proc. Natl. Acad. Sci. U.S.A.">
        <title>Genome reduction in Leptospira borgpetersenii reflects limited transmission potential.</title>
        <authorList>
            <person name="Bulach D.M."/>
            <person name="Zuerner R.L."/>
            <person name="Wilson P."/>
            <person name="Seemann T."/>
            <person name="McGrath A."/>
            <person name="Cullen P.A."/>
            <person name="Davis J."/>
            <person name="Johnson M."/>
            <person name="Kuczek E."/>
            <person name="Alt D.P."/>
            <person name="Peterson-Burch B."/>
            <person name="Coppel R.L."/>
            <person name="Rood J.I."/>
            <person name="Davies J.K."/>
            <person name="Adler B."/>
        </authorList>
    </citation>
    <scope>NUCLEOTIDE SEQUENCE [LARGE SCALE GENOMIC DNA]</scope>
    <source>
        <strain>JB197</strain>
    </source>
</reference>